<organism>
    <name type="scientific">Francisella tularensis subsp. mediasiatica (strain FSC147)</name>
    <dbReference type="NCBI Taxonomy" id="441952"/>
    <lineage>
        <taxon>Bacteria</taxon>
        <taxon>Pseudomonadati</taxon>
        <taxon>Pseudomonadota</taxon>
        <taxon>Gammaproteobacteria</taxon>
        <taxon>Thiotrichales</taxon>
        <taxon>Francisellaceae</taxon>
        <taxon>Francisella</taxon>
    </lineage>
</organism>
<evidence type="ECO:0000255" key="1">
    <source>
        <dbReference type="HAMAP-Rule" id="MF_00254"/>
    </source>
</evidence>
<name>SYGA_FRATM</name>
<feature type="chain" id="PRO_1000101193" description="Glycine--tRNA ligase alpha subunit">
    <location>
        <begin position="1"/>
        <end position="296"/>
    </location>
</feature>
<reference key="1">
    <citation type="journal article" date="2009" name="PLoS Pathog.">
        <title>Molecular evolutionary consequences of niche restriction in Francisella tularensis, a facultative intracellular pathogen.</title>
        <authorList>
            <person name="Larsson P."/>
            <person name="Elfsmark D."/>
            <person name="Svensson K."/>
            <person name="Wikstroem P."/>
            <person name="Forsman M."/>
            <person name="Brettin T."/>
            <person name="Keim P."/>
            <person name="Johansson A."/>
        </authorList>
    </citation>
    <scope>NUCLEOTIDE SEQUENCE [LARGE SCALE GENOMIC DNA]</scope>
    <source>
        <strain>FSC147</strain>
    </source>
</reference>
<comment type="catalytic activity">
    <reaction evidence="1">
        <text>tRNA(Gly) + glycine + ATP = glycyl-tRNA(Gly) + AMP + diphosphate</text>
        <dbReference type="Rhea" id="RHEA:16013"/>
        <dbReference type="Rhea" id="RHEA-COMP:9664"/>
        <dbReference type="Rhea" id="RHEA-COMP:9683"/>
        <dbReference type="ChEBI" id="CHEBI:30616"/>
        <dbReference type="ChEBI" id="CHEBI:33019"/>
        <dbReference type="ChEBI" id="CHEBI:57305"/>
        <dbReference type="ChEBI" id="CHEBI:78442"/>
        <dbReference type="ChEBI" id="CHEBI:78522"/>
        <dbReference type="ChEBI" id="CHEBI:456215"/>
        <dbReference type="EC" id="6.1.1.14"/>
    </reaction>
</comment>
<comment type="subunit">
    <text evidence="1">Tetramer of two alpha and two beta subunits.</text>
</comment>
<comment type="subcellular location">
    <subcellularLocation>
        <location evidence="1">Cytoplasm</location>
    </subcellularLocation>
</comment>
<comment type="similarity">
    <text evidence="1">Belongs to the class-II aminoacyl-tRNA synthetase family.</text>
</comment>
<gene>
    <name evidence="1" type="primary">glyQ</name>
    <name type="ordered locus">FTM_0575</name>
</gene>
<keyword id="KW-0030">Aminoacyl-tRNA synthetase</keyword>
<keyword id="KW-0067">ATP-binding</keyword>
<keyword id="KW-0963">Cytoplasm</keyword>
<keyword id="KW-0436">Ligase</keyword>
<keyword id="KW-0547">Nucleotide-binding</keyword>
<keyword id="KW-0648">Protein biosynthesis</keyword>
<dbReference type="EC" id="6.1.1.14" evidence="1"/>
<dbReference type="EMBL" id="CP000915">
    <property type="protein sequence ID" value="ACD30576.1"/>
    <property type="molecule type" value="Genomic_DNA"/>
</dbReference>
<dbReference type="SMR" id="B2SFN3"/>
<dbReference type="KEGG" id="ftm:FTM_0575"/>
<dbReference type="HOGENOM" id="CLU_057066_1_0_6"/>
<dbReference type="GO" id="GO:0005829">
    <property type="term" value="C:cytosol"/>
    <property type="evidence" value="ECO:0007669"/>
    <property type="project" value="TreeGrafter"/>
</dbReference>
<dbReference type="GO" id="GO:0005524">
    <property type="term" value="F:ATP binding"/>
    <property type="evidence" value="ECO:0007669"/>
    <property type="project" value="UniProtKB-UniRule"/>
</dbReference>
<dbReference type="GO" id="GO:0004820">
    <property type="term" value="F:glycine-tRNA ligase activity"/>
    <property type="evidence" value="ECO:0007669"/>
    <property type="project" value="UniProtKB-UniRule"/>
</dbReference>
<dbReference type="GO" id="GO:0006426">
    <property type="term" value="P:glycyl-tRNA aminoacylation"/>
    <property type="evidence" value="ECO:0007669"/>
    <property type="project" value="UniProtKB-UniRule"/>
</dbReference>
<dbReference type="CDD" id="cd00733">
    <property type="entry name" value="GlyRS_alpha_core"/>
    <property type="match status" value="1"/>
</dbReference>
<dbReference type="FunFam" id="3.30.930.10:FF:000006">
    <property type="entry name" value="Glycine--tRNA ligase alpha subunit"/>
    <property type="match status" value="1"/>
</dbReference>
<dbReference type="Gene3D" id="3.30.930.10">
    <property type="entry name" value="Bira Bifunctional Protein, Domain 2"/>
    <property type="match status" value="1"/>
</dbReference>
<dbReference type="Gene3D" id="1.20.58.180">
    <property type="entry name" value="Class II aaRS and biotin synthetases, domain 2"/>
    <property type="match status" value="1"/>
</dbReference>
<dbReference type="HAMAP" id="MF_00254">
    <property type="entry name" value="Gly_tRNA_synth_alpha"/>
    <property type="match status" value="1"/>
</dbReference>
<dbReference type="InterPro" id="IPR045864">
    <property type="entry name" value="aa-tRNA-synth_II/BPL/LPL"/>
</dbReference>
<dbReference type="InterPro" id="IPR006194">
    <property type="entry name" value="Gly-tRNA-synth_heterodimer"/>
</dbReference>
<dbReference type="InterPro" id="IPR002310">
    <property type="entry name" value="Gly-tRNA_ligase_asu"/>
</dbReference>
<dbReference type="NCBIfam" id="TIGR00388">
    <property type="entry name" value="glyQ"/>
    <property type="match status" value="1"/>
</dbReference>
<dbReference type="NCBIfam" id="NF006827">
    <property type="entry name" value="PRK09348.1"/>
    <property type="match status" value="1"/>
</dbReference>
<dbReference type="PANTHER" id="PTHR30075:SF2">
    <property type="entry name" value="GLYCINE--TRNA LIGASE, CHLOROPLASTIC_MITOCHONDRIAL 2"/>
    <property type="match status" value="1"/>
</dbReference>
<dbReference type="PANTHER" id="PTHR30075">
    <property type="entry name" value="GLYCYL-TRNA SYNTHETASE"/>
    <property type="match status" value="1"/>
</dbReference>
<dbReference type="Pfam" id="PF02091">
    <property type="entry name" value="tRNA-synt_2e"/>
    <property type="match status" value="1"/>
</dbReference>
<dbReference type="PRINTS" id="PR01044">
    <property type="entry name" value="TRNASYNTHGA"/>
</dbReference>
<dbReference type="SUPFAM" id="SSF55681">
    <property type="entry name" value="Class II aaRS and biotin synthetases"/>
    <property type="match status" value="1"/>
</dbReference>
<dbReference type="PROSITE" id="PS50861">
    <property type="entry name" value="AA_TRNA_LIGASE_II_GLYAB"/>
    <property type="match status" value="1"/>
</dbReference>
<protein>
    <recommendedName>
        <fullName evidence="1">Glycine--tRNA ligase alpha subunit</fullName>
        <ecNumber evidence="1">6.1.1.14</ecNumber>
    </recommendedName>
    <alternativeName>
        <fullName evidence="1">Glycyl-tRNA synthetase alpha subunit</fullName>
        <shortName evidence="1">GlyRS</shortName>
    </alternativeName>
</protein>
<sequence>MLTFQEIILKLHHYWASKGCAIVQPLDMEVGAGTFHPATTLRAIGPEPWTAAYVQPSRRPTDGRYGENPNRTQHYYQYQVVMKPSPDDIQELYLGSLRELGIDPLENDIRFVEDNWESPTLGAWGLGWEVWSNGMEITQFTYFQQVGGLECKPVMGEITYGLERLAMYIQNVDSMYDILWANTQNGPLYYRDVFLQNEVEMSTYNFEEANVEELFKQFDLLEKEGYRLVEKNLPIPAYEFVLKASHTFNLLDARHAISVTERQGYILRVRKLALEVAKEYYSAREKSGFPAFKKDN</sequence>
<accession>B2SFN3</accession>
<proteinExistence type="inferred from homology"/>